<reference key="1">
    <citation type="journal article" date="2002" name="Proc. Natl. Acad. Sci. U.S.A.">
        <title>Genome sequence of the hyperthermophilic crenarchaeon Pyrobaculum aerophilum.</title>
        <authorList>
            <person name="Fitz-Gibbon S.T."/>
            <person name="Ladner H."/>
            <person name="Kim U.-J."/>
            <person name="Stetter K.O."/>
            <person name="Simon M.I."/>
            <person name="Miller J.H."/>
        </authorList>
    </citation>
    <scope>NUCLEOTIDE SEQUENCE [LARGE SCALE GENOMIC DNA]</scope>
    <source>
        <strain>ATCC 51768 / DSM 7523 / JCM 9630 / CIP 104966 / NBRC 100827 / IM2</strain>
    </source>
</reference>
<sequence>MLTPVVSYTTVREVKGPLIVIEKTRGVSYGEVGEVIGPDGEPRRVQVIEVGTDYAVAQVLGGTLGLPAKGSTVRFYGKTLKIPVSEQLIGRILDGKGQPRDHMPLPPPEDFRDVNGEPLNPYSREYPEEPIETGISAIDGLYTLVRGQKLPIFSGTGLPHNLMAAQVVRQATVRGSEEEFAVVFVGVGIKTEEALFFMDEFRKTGALRRAVAVLNLASDPVAERILAPRVGLTIGEYLAWQLGYHVLVVITDMTNYCEGLRELSSGRGELPGRRGYPGYMYTDLATIYERAGRARGRRGSVTQFPILTMPHDDITHPIPDLTGYITEGQLVLSRAMWGKGIYPPFDVIMSLSRLAKDAIGEGKTREDHKDVANTLIAAYSKALEIRNLATLVGERNLGWRERRYLRFADAFEQRFIKQGYYERRSFEETLDIGWDVLSILPEDELTNARPQITQKFYRRHIFESVQL</sequence>
<evidence type="ECO:0000255" key="1">
    <source>
        <dbReference type="HAMAP-Rule" id="MF_00310"/>
    </source>
</evidence>
<evidence type="ECO:0000256" key="2">
    <source>
        <dbReference type="SAM" id="MobiDB-lite"/>
    </source>
</evidence>
<accession>Q8ZXR2</accession>
<keyword id="KW-0066">ATP synthesis</keyword>
<keyword id="KW-1003">Cell membrane</keyword>
<keyword id="KW-0375">Hydrogen ion transport</keyword>
<keyword id="KW-0406">Ion transport</keyword>
<keyword id="KW-0472">Membrane</keyword>
<keyword id="KW-1185">Reference proteome</keyword>
<keyword id="KW-0813">Transport</keyword>
<feature type="chain" id="PRO_0000144662" description="A-type ATP synthase subunit B">
    <location>
        <begin position="1"/>
        <end position="467"/>
    </location>
</feature>
<feature type="region of interest" description="Disordered" evidence="2">
    <location>
        <begin position="95"/>
        <end position="114"/>
    </location>
</feature>
<name>AATB_PYRAE</name>
<dbReference type="EMBL" id="AE009441">
    <property type="protein sequence ID" value="AAL63284.1"/>
    <property type="molecule type" value="Genomic_DNA"/>
</dbReference>
<dbReference type="RefSeq" id="WP_011007756.1">
    <property type="nucleotide sequence ID" value="NC_003364.1"/>
</dbReference>
<dbReference type="SMR" id="Q8ZXR2"/>
<dbReference type="FunCoup" id="Q8ZXR2">
    <property type="interactions" value="86"/>
</dbReference>
<dbReference type="STRING" id="178306.PAE1146"/>
<dbReference type="EnsemblBacteria" id="AAL63284">
    <property type="protein sequence ID" value="AAL63284"/>
    <property type="gene ID" value="PAE1146"/>
</dbReference>
<dbReference type="GeneID" id="1465522"/>
<dbReference type="KEGG" id="pai:PAE1146"/>
<dbReference type="PATRIC" id="fig|178306.9.peg.848"/>
<dbReference type="eggNOG" id="arCOG00865">
    <property type="taxonomic scope" value="Archaea"/>
</dbReference>
<dbReference type="HOGENOM" id="CLU_022916_0_0_2"/>
<dbReference type="InParanoid" id="Q8ZXR2"/>
<dbReference type="Proteomes" id="UP000002439">
    <property type="component" value="Chromosome"/>
</dbReference>
<dbReference type="GO" id="GO:0005886">
    <property type="term" value="C:plasma membrane"/>
    <property type="evidence" value="ECO:0007669"/>
    <property type="project" value="UniProtKB-SubCell"/>
</dbReference>
<dbReference type="GO" id="GO:0005524">
    <property type="term" value="F:ATP binding"/>
    <property type="evidence" value="ECO:0007669"/>
    <property type="project" value="UniProtKB-UniRule"/>
</dbReference>
<dbReference type="GO" id="GO:0046933">
    <property type="term" value="F:proton-transporting ATP synthase activity, rotational mechanism"/>
    <property type="evidence" value="ECO:0007669"/>
    <property type="project" value="UniProtKB-UniRule"/>
</dbReference>
<dbReference type="GO" id="GO:0046961">
    <property type="term" value="F:proton-transporting ATPase activity, rotational mechanism"/>
    <property type="evidence" value="ECO:0000318"/>
    <property type="project" value="GO_Central"/>
</dbReference>
<dbReference type="GO" id="GO:0042777">
    <property type="term" value="P:proton motive force-driven plasma membrane ATP synthesis"/>
    <property type="evidence" value="ECO:0007669"/>
    <property type="project" value="UniProtKB-UniRule"/>
</dbReference>
<dbReference type="CDD" id="cd18112">
    <property type="entry name" value="ATP-synt_V_A-type_beta_C"/>
    <property type="match status" value="1"/>
</dbReference>
<dbReference type="CDD" id="cd18118">
    <property type="entry name" value="ATP-synt_V_A-type_beta_N"/>
    <property type="match status" value="1"/>
</dbReference>
<dbReference type="CDD" id="cd01135">
    <property type="entry name" value="V_A-ATPase_B"/>
    <property type="match status" value="1"/>
</dbReference>
<dbReference type="Gene3D" id="3.40.50.12240">
    <property type="match status" value="1"/>
</dbReference>
<dbReference type="HAMAP" id="MF_00310">
    <property type="entry name" value="ATP_synth_B_arch"/>
    <property type="match status" value="1"/>
</dbReference>
<dbReference type="InterPro" id="IPR055190">
    <property type="entry name" value="ATP-synt_VA_C"/>
</dbReference>
<dbReference type="InterPro" id="IPR004100">
    <property type="entry name" value="ATPase_F1/V1/A1_a/bsu_N"/>
</dbReference>
<dbReference type="InterPro" id="IPR000194">
    <property type="entry name" value="ATPase_F1/V1/A1_a/bsu_nucl-bd"/>
</dbReference>
<dbReference type="InterPro" id="IPR027417">
    <property type="entry name" value="P-loop_NTPase"/>
</dbReference>
<dbReference type="InterPro" id="IPR022879">
    <property type="entry name" value="V-ATPase_su_B/beta"/>
</dbReference>
<dbReference type="NCBIfam" id="NF003235">
    <property type="entry name" value="PRK04196.1"/>
    <property type="match status" value="1"/>
</dbReference>
<dbReference type="PANTHER" id="PTHR43389">
    <property type="entry name" value="V-TYPE PROTON ATPASE SUBUNIT B"/>
    <property type="match status" value="1"/>
</dbReference>
<dbReference type="PANTHER" id="PTHR43389:SF4">
    <property type="entry name" value="V-TYPE PROTON ATPASE SUBUNIT B"/>
    <property type="match status" value="1"/>
</dbReference>
<dbReference type="Pfam" id="PF00006">
    <property type="entry name" value="ATP-synt_ab"/>
    <property type="match status" value="1"/>
</dbReference>
<dbReference type="Pfam" id="PF02874">
    <property type="entry name" value="ATP-synt_ab_N"/>
    <property type="match status" value="1"/>
</dbReference>
<dbReference type="Pfam" id="PF22919">
    <property type="entry name" value="ATP-synt_VA_C"/>
    <property type="match status" value="1"/>
</dbReference>
<dbReference type="SUPFAM" id="SSF52540">
    <property type="entry name" value="P-loop containing nucleoside triphosphate hydrolases"/>
    <property type="match status" value="1"/>
</dbReference>
<organism>
    <name type="scientific">Pyrobaculum aerophilum (strain ATCC 51768 / DSM 7523 / JCM 9630 / CIP 104966 / NBRC 100827 / IM2)</name>
    <dbReference type="NCBI Taxonomy" id="178306"/>
    <lineage>
        <taxon>Archaea</taxon>
        <taxon>Thermoproteota</taxon>
        <taxon>Thermoprotei</taxon>
        <taxon>Thermoproteales</taxon>
        <taxon>Thermoproteaceae</taxon>
        <taxon>Pyrobaculum</taxon>
    </lineage>
</organism>
<comment type="function">
    <text evidence="1">Component of the A-type ATP synthase that produces ATP from ADP in the presence of a proton gradient across the membrane. The B chain is a regulatory subunit.</text>
</comment>
<comment type="subunit">
    <text evidence="1">Has multiple subunits with at least A(3), B(3), C, D, E, F, H, I and proteolipid K(x).</text>
</comment>
<comment type="subcellular location">
    <subcellularLocation>
        <location evidence="1">Cell membrane</location>
        <topology evidence="1">Peripheral membrane protein</topology>
    </subcellularLocation>
</comment>
<comment type="similarity">
    <text evidence="1">Belongs to the ATPase alpha/beta chains family.</text>
</comment>
<protein>
    <recommendedName>
        <fullName evidence="1">A-type ATP synthase subunit B</fullName>
    </recommendedName>
</protein>
<gene>
    <name evidence="1" type="primary">atpB</name>
    <name type="ordered locus">PAE1146</name>
</gene>
<proteinExistence type="inferred from homology"/>